<reference evidence="20" key="1">
    <citation type="journal article" date="2000" name="Science">
        <title>The genome sequence of Drosophila melanogaster.</title>
        <authorList>
            <person name="Adams M.D."/>
            <person name="Celniker S.E."/>
            <person name="Holt R.A."/>
            <person name="Evans C.A."/>
            <person name="Gocayne J.D."/>
            <person name="Amanatides P.G."/>
            <person name="Scherer S.E."/>
            <person name="Li P.W."/>
            <person name="Hoskins R.A."/>
            <person name="Galle R.F."/>
            <person name="George R.A."/>
            <person name="Lewis S.E."/>
            <person name="Richards S."/>
            <person name="Ashburner M."/>
            <person name="Henderson S.N."/>
            <person name="Sutton G.G."/>
            <person name="Wortman J.R."/>
            <person name="Yandell M.D."/>
            <person name="Zhang Q."/>
            <person name="Chen L.X."/>
            <person name="Brandon R.C."/>
            <person name="Rogers Y.-H.C."/>
            <person name="Blazej R.G."/>
            <person name="Champe M."/>
            <person name="Pfeiffer B.D."/>
            <person name="Wan K.H."/>
            <person name="Doyle C."/>
            <person name="Baxter E.G."/>
            <person name="Helt G."/>
            <person name="Nelson C.R."/>
            <person name="Miklos G.L.G."/>
            <person name="Abril J.F."/>
            <person name="Agbayani A."/>
            <person name="An H.-J."/>
            <person name="Andrews-Pfannkoch C."/>
            <person name="Baldwin D."/>
            <person name="Ballew R.M."/>
            <person name="Basu A."/>
            <person name="Baxendale J."/>
            <person name="Bayraktaroglu L."/>
            <person name="Beasley E.M."/>
            <person name="Beeson K.Y."/>
            <person name="Benos P.V."/>
            <person name="Berman B.P."/>
            <person name="Bhandari D."/>
            <person name="Bolshakov S."/>
            <person name="Borkova D."/>
            <person name="Botchan M.R."/>
            <person name="Bouck J."/>
            <person name="Brokstein P."/>
            <person name="Brottier P."/>
            <person name="Burtis K.C."/>
            <person name="Busam D.A."/>
            <person name="Butler H."/>
            <person name="Cadieu E."/>
            <person name="Center A."/>
            <person name="Chandra I."/>
            <person name="Cherry J.M."/>
            <person name="Cawley S."/>
            <person name="Dahlke C."/>
            <person name="Davenport L.B."/>
            <person name="Davies P."/>
            <person name="de Pablos B."/>
            <person name="Delcher A."/>
            <person name="Deng Z."/>
            <person name="Mays A.D."/>
            <person name="Dew I."/>
            <person name="Dietz S.M."/>
            <person name="Dodson K."/>
            <person name="Doup L.E."/>
            <person name="Downes M."/>
            <person name="Dugan-Rocha S."/>
            <person name="Dunkov B.C."/>
            <person name="Dunn P."/>
            <person name="Durbin K.J."/>
            <person name="Evangelista C.C."/>
            <person name="Ferraz C."/>
            <person name="Ferriera S."/>
            <person name="Fleischmann W."/>
            <person name="Fosler C."/>
            <person name="Gabrielian A.E."/>
            <person name="Garg N.S."/>
            <person name="Gelbart W.M."/>
            <person name="Glasser K."/>
            <person name="Glodek A."/>
            <person name="Gong F."/>
            <person name="Gorrell J.H."/>
            <person name="Gu Z."/>
            <person name="Guan P."/>
            <person name="Harris M."/>
            <person name="Harris N.L."/>
            <person name="Harvey D.A."/>
            <person name="Heiman T.J."/>
            <person name="Hernandez J.R."/>
            <person name="Houck J."/>
            <person name="Hostin D."/>
            <person name="Houston K.A."/>
            <person name="Howland T.J."/>
            <person name="Wei M.-H."/>
            <person name="Ibegwam C."/>
            <person name="Jalali M."/>
            <person name="Kalush F."/>
            <person name="Karpen G.H."/>
            <person name="Ke Z."/>
            <person name="Kennison J.A."/>
            <person name="Ketchum K.A."/>
            <person name="Kimmel B.E."/>
            <person name="Kodira C.D."/>
            <person name="Kraft C.L."/>
            <person name="Kravitz S."/>
            <person name="Kulp D."/>
            <person name="Lai Z."/>
            <person name="Lasko P."/>
            <person name="Lei Y."/>
            <person name="Levitsky A.A."/>
            <person name="Li J.H."/>
            <person name="Li Z."/>
            <person name="Liang Y."/>
            <person name="Lin X."/>
            <person name="Liu X."/>
            <person name="Mattei B."/>
            <person name="McIntosh T.C."/>
            <person name="McLeod M.P."/>
            <person name="McPherson D."/>
            <person name="Merkulov G."/>
            <person name="Milshina N.V."/>
            <person name="Mobarry C."/>
            <person name="Morris J."/>
            <person name="Moshrefi A."/>
            <person name="Mount S.M."/>
            <person name="Moy M."/>
            <person name="Murphy B."/>
            <person name="Murphy L."/>
            <person name="Muzny D.M."/>
            <person name="Nelson D.L."/>
            <person name="Nelson D.R."/>
            <person name="Nelson K.A."/>
            <person name="Nixon K."/>
            <person name="Nusskern D.R."/>
            <person name="Pacleb J.M."/>
            <person name="Palazzolo M."/>
            <person name="Pittman G.S."/>
            <person name="Pan S."/>
            <person name="Pollard J."/>
            <person name="Puri V."/>
            <person name="Reese M.G."/>
            <person name="Reinert K."/>
            <person name="Remington K."/>
            <person name="Saunders R.D.C."/>
            <person name="Scheeler F."/>
            <person name="Shen H."/>
            <person name="Shue B.C."/>
            <person name="Siden-Kiamos I."/>
            <person name="Simpson M."/>
            <person name="Skupski M.P."/>
            <person name="Smith T.J."/>
            <person name="Spier E."/>
            <person name="Spradling A.C."/>
            <person name="Stapleton M."/>
            <person name="Strong R."/>
            <person name="Sun E."/>
            <person name="Svirskas R."/>
            <person name="Tector C."/>
            <person name="Turner R."/>
            <person name="Venter E."/>
            <person name="Wang A.H."/>
            <person name="Wang X."/>
            <person name="Wang Z.-Y."/>
            <person name="Wassarman D.A."/>
            <person name="Weinstock G.M."/>
            <person name="Weissenbach J."/>
            <person name="Williams S.M."/>
            <person name="Woodage T."/>
            <person name="Worley K.C."/>
            <person name="Wu D."/>
            <person name="Yang S."/>
            <person name="Yao Q.A."/>
            <person name="Ye J."/>
            <person name="Yeh R.-F."/>
            <person name="Zaveri J.S."/>
            <person name="Zhan M."/>
            <person name="Zhang G."/>
            <person name="Zhao Q."/>
            <person name="Zheng L."/>
            <person name="Zheng X.H."/>
            <person name="Zhong F.N."/>
            <person name="Zhong W."/>
            <person name="Zhou X."/>
            <person name="Zhu S.C."/>
            <person name="Zhu X."/>
            <person name="Smith H.O."/>
            <person name="Gibbs R.A."/>
            <person name="Myers E.W."/>
            <person name="Rubin G.M."/>
            <person name="Venter J.C."/>
        </authorList>
    </citation>
    <scope>NUCLEOTIDE SEQUENCE [LARGE SCALE GENOMIC DNA]</scope>
    <source>
        <strain>Berkeley</strain>
    </source>
</reference>
<reference evidence="18 20" key="2">
    <citation type="journal article" date="2002" name="Genome Biol.">
        <title>Annotation of the Drosophila melanogaster euchromatic genome: a systematic review.</title>
        <authorList>
            <person name="Misra S."/>
            <person name="Crosby M.A."/>
            <person name="Mungall C.J."/>
            <person name="Matthews B.B."/>
            <person name="Campbell K.S."/>
            <person name="Hradecky P."/>
            <person name="Huang Y."/>
            <person name="Kaminker J.S."/>
            <person name="Millburn G.H."/>
            <person name="Prochnik S.E."/>
            <person name="Smith C.D."/>
            <person name="Tupy J.L."/>
            <person name="Whitfield E.J."/>
            <person name="Bayraktaroglu L."/>
            <person name="Berman B.P."/>
            <person name="Bettencourt B.R."/>
            <person name="Celniker S.E."/>
            <person name="de Grey A.D.N.J."/>
            <person name="Drysdale R.A."/>
            <person name="Harris N.L."/>
            <person name="Richter J."/>
            <person name="Russo S."/>
            <person name="Schroeder A.J."/>
            <person name="Shu S.Q."/>
            <person name="Stapleton M."/>
            <person name="Yamada C."/>
            <person name="Ashburner M."/>
            <person name="Gelbart W.M."/>
            <person name="Rubin G.M."/>
            <person name="Lewis S.E."/>
        </authorList>
    </citation>
    <scope>GENOME REANNOTATION</scope>
    <scope>ALTERNATIVE SPLICING</scope>
    <source>
        <strain>Berkeley</strain>
    </source>
</reference>
<reference evidence="18 19" key="3">
    <citation type="journal article" date="2002" name="Genome Biol.">
        <title>A Drosophila full-length cDNA resource.</title>
        <authorList>
            <person name="Stapleton M."/>
            <person name="Carlson J.W."/>
            <person name="Brokstein P."/>
            <person name="Yu C."/>
            <person name="Champe M."/>
            <person name="George R.A."/>
            <person name="Guarin H."/>
            <person name="Kronmiller B."/>
            <person name="Pacleb J.M."/>
            <person name="Park S."/>
            <person name="Wan K.H."/>
            <person name="Rubin G.M."/>
            <person name="Celniker S.E."/>
        </authorList>
    </citation>
    <scope>NUCLEOTIDE SEQUENCE [LARGE SCALE MRNA]</scope>
    <source>
        <strain evidence="19">Berkeley</strain>
        <tissue evidence="2">Embryo</tissue>
    </source>
</reference>
<reference evidence="18" key="4">
    <citation type="journal article" date="2009" name="Cell">
        <title>A synaptic vesicle-associated Ca2+ channel promotes endocytosis and couples exocytosis to endocytosis.</title>
        <authorList>
            <person name="Yao C.-K."/>
            <person name="Lin Y.Q."/>
            <person name="Ly C.V."/>
            <person name="Ohyama T."/>
            <person name="Haueter C.M."/>
            <person name="Moiseenkova-Bell V.Y."/>
            <person name="Wensel T.G."/>
            <person name="Bellen H.J."/>
        </authorList>
    </citation>
    <scope>FUNCTION</scope>
    <scope>SUBUNIT (ISOFORM LOSE-A)</scope>
    <scope>SUBCELLULAR LOCATION</scope>
    <scope>ALTERNATIVE SPLICING</scope>
    <scope>DEVELOPMENTAL STAGE (ISOFORM LOSE-A)</scope>
    <scope>DISRUPTION PHENOTYPE</scope>
    <scope>MUTAGENESIS OF GLU-79 AND GLY-128</scope>
</reference>
<reference key="5">
    <citation type="journal article" date="2010" name="Dev. Cell">
        <title>Flower forms an extracellular code that reveals the fitness of a cell to its neighbors in Drosophila.</title>
        <authorList>
            <person name="Rhiner C."/>
            <person name="Lopez-Gay J.M."/>
            <person name="Soldini D."/>
            <person name="Casas-Tinto S."/>
            <person name="Martin F.A."/>
            <person name="Lombardia L."/>
            <person name="Moreno E."/>
        </authorList>
    </citation>
    <scope>FUNCTION</scope>
    <scope>SUBCELLULAR LOCATION (ISOFORM UBI)</scope>
    <scope>DEVELOPMENTAL STAGE (ISOFORM UBI)</scope>
    <scope>DISRUPTION PHENOTYPE</scope>
</reference>
<reference key="6">
    <citation type="journal article" date="2010" name="Dev. Cell">
        <title>Drosophila SPARC is a self-protective signal expressed by loser cells during cell competition.</title>
        <authorList>
            <person name="Portela M."/>
            <person name="Casas-Tinto S."/>
            <person name="Rhiner C."/>
            <person name="Lopez-Gay J.M."/>
            <person name="Dominguez O."/>
            <person name="Soldini D."/>
            <person name="Moreno E."/>
        </authorList>
    </citation>
    <scope>FUNCTION</scope>
    <scope>DISRUPTION PHENOTYPE</scope>
</reference>
<reference key="7">
    <citation type="journal article" date="2013" name="Curr. Biol.">
        <title>'Fitness fingerprints' mediate physiological culling of unwanted neurons in Drosophila.</title>
        <authorList>
            <person name="Merino M.M."/>
            <person name="Rhiner C."/>
            <person name="Portela M."/>
            <person name="Moreno E."/>
        </authorList>
    </citation>
    <scope>FUNCTION (ISOFORMS UBI AND LOSE-A)</scope>
    <scope>DEVELOPMENTAL STAGE (ISOFORMS UBI; LOSE-A AND LOSE-B)</scope>
</reference>
<reference key="8">
    <citation type="journal article" date="2015" name="Cell">
        <title>Elimination of unfit cells maintains tissue health and prolongs lifespan.</title>
        <authorList>
            <person name="Merino M.M."/>
            <person name="Rhiner C."/>
            <person name="Lopez-Gay J.M."/>
            <person name="Buechel D."/>
            <person name="Hauert B."/>
            <person name="Moreno E."/>
        </authorList>
    </citation>
    <scope>FUNCTION</scope>
    <scope>INDUCTION BY UV DAMAGE (ISOFORMS LOSE-A AND LOSE-B)</scope>
</reference>
<reference key="9">
    <citation type="journal article" date="2015" name="Curr. Biol.">
        <title>Brain regeneration in Drosophila involves comparison of neuronal fitness.</title>
        <authorList>
            <person name="Moreno E."/>
            <person name="Fernandez-Marrero Y."/>
            <person name="Meyer P."/>
            <person name="Rhiner C."/>
        </authorList>
    </citation>
    <scope>FUNCTION</scope>
    <scope>SUBCELLULAR LOCATION</scope>
    <scope>INDUCTION BY TRAUMATIC BRAIN INJURY (ISOFORM LOSE-B)</scope>
    <scope>DEVELOPMENTAL STAGE (ISOFORMS LOSE-A AND LOSE-B)</scope>
</reference>
<reference key="10">
    <citation type="journal article" date="2017" name="Mech. Dev.">
        <title>piragua encodes a zinc finger protein required for development in Drosophila.</title>
        <authorList>
            <person name="Nazario-Yepiz N.O."/>
            <person name="Riesgo-Escovar J.R."/>
        </authorList>
    </citation>
    <scope>FUNCTION</scope>
    <scope>DISRUPTION PHENOTYPE</scope>
</reference>
<reference key="11">
    <citation type="journal article" date="2017" name="PLoS Biol.">
        <title>A Ca2+ channel differentially regulates Clathrin-mediated and activity-dependent bulk endocytosis.</title>
        <authorList>
            <person name="Yao C.K."/>
            <person name="Liu Y.T."/>
            <person name="Lee I.C."/>
            <person name="Wang Y.T."/>
            <person name="Wu P.Y."/>
        </authorList>
    </citation>
    <scope>FUNCTION</scope>
    <scope>ACTIVITY REGULATION</scope>
    <scope>SUBCELLULAR LOCATION</scope>
    <scope>MUTAGENESIS OF GLU-79</scope>
</reference>
<reference key="12">
    <citation type="journal article" date="2018" name="Cell Rep.">
        <title>Culling Less Fit Neurons Protects against Amyloid-beta-Induced Brain Damage and Cognitive and Motor Decline.</title>
        <authorList>
            <person name="Coelho D.S."/>
            <person name="Schwartz S."/>
            <person name="Merino M.M."/>
            <person name="Hauert B."/>
            <person name="Topfel B."/>
            <person name="Tieche C."/>
            <person name="Rhiner C."/>
            <person name="Moreno E."/>
        </authorList>
    </citation>
    <scope>FUNCTION</scope>
    <scope>TISSUE SPECIFICITY (ISOFORMS LOSE-A AND LOSE-B)</scope>
</reference>
<reference key="13">
    <citation type="journal article" date="2018" name="J. Cell Biol.">
        <title>Cytotoxic granule endocytosis depends on the Flower protein.</title>
        <authorList>
            <person name="Chang H.F."/>
            <person name="Mannebach S."/>
            <person name="Beck A."/>
            <person name="Ravichandran K."/>
            <person name="Krause E."/>
            <person name="Frohnweiler K."/>
            <person name="Fecher-Trost C."/>
            <person name="Schirra C."/>
            <person name="Pattu V."/>
            <person name="Flockerzi V."/>
            <person name="Rettig J."/>
        </authorList>
    </citation>
    <scope>FUNCTION</scope>
</reference>
<reference key="14">
    <citation type="journal article" date="2020" name="Elife">
        <title>A positive feedback loop between Flower and PI(4,5)P2 at periactive zones controls bulk endocytosis in Drosophila.</title>
        <authorList>
            <person name="Li T.N."/>
            <person name="Chen Y.J."/>
            <person name="Lu T.Y."/>
            <person name="Wang Y.T."/>
            <person name="Lin H.C."/>
            <person name="Yao C.K."/>
        </authorList>
    </citation>
    <scope>FUNCTION</scope>
    <scope>SUBCELLULAR LOCATION</scope>
    <scope>MUTAGENESIS OF GLU-79; 29-LYS--ARG-33 (ISOFORM LOSE-A); 146-LYS--LYS-150 (ISOFORM LOSE-A); LYS-95 (ISOFORM LOSE-A); LYS-100 (ISOFORM LOSE-A); LYS-105 (ISOFORM LOSE-A) AND 146-LYS--ARG-150 (ISOFORM LOSE-A)</scope>
</reference>
<reference key="15">
    <citation type="journal article" date="2022" name="Nat. Cell Biol.">
        <title>A role for Flower and cell death in controlling morphogen gradient scaling.</title>
        <authorList>
            <person name="Merino M.M."/>
            <person name="Seum C."/>
            <person name="Dubois M."/>
            <person name="Gonzalez-Gaitan M."/>
        </authorList>
    </citation>
    <scope>FUNCTION</scope>
    <scope>SUBCELLULAR LOCATION (ISOFORMS UBI; LOSE-A AND LOSE-B)</scope>
    <scope>INTERACTION WITH DALLY AND MAGU</scope>
    <scope>TISSUE SPECIFICITY</scope>
    <scope>DISRUPTION PHENOTYPE</scope>
</reference>
<sequence>MSFAEKITGLLARPNQQDPIGPEQPWYLKYGSRLLGIVAAFFAILFGLWNVFSIITLSVSCLVAGILQMVAGFVVMLLEAPCCFVCFGQVNEIAEKVESKPLYFRAGLYIAMAIPPIILCFGLASLFGSGLIFGTGVVYGMMALGKKASAEDMRAAAQQTFGGNTPAQTNDRAGIVNNAQPFSFTGAVGTDSNV</sequence>
<comment type="function">
    <text evidence="3 4 5 6 7 8 9 10 11 12 13 14">Transmembrane protein which mediates synaptic endocytosis, fitness-based cell culling, neuronal culling, morphogen gradient scaling, and calcium transport (PubMed:20627080, PubMed:23810538, PubMed:25601460, PubMed:28011160, PubMed:33300871, PubMed:35301437). Regulates synaptic endocytosis and hence couples exo- with endocytosis (PubMed:19737521, PubMed:28414717, PubMed:29288152, PubMed:33300871). Controls two major modes of synaptic vesicle (SV) endocytosis in the synaptic boutons of neuromuscular junctions (NMJs); Ca(2+) channel-independent Clathrin-mediated endocytosis (CME) in response to mild stimulation, and Ca(2+) channel-dependent activity-dependent bulk endocytosis (ADBE) in response to strong stimulation (PubMed:28414717, PubMed:33300871). Functions in ADBE and subsequent SV reformation from bulk endosomes by initiating Ca(2+) channel-dependent phosphatidylinositol 4,5-bisphosphate (PtdIns(4,5)P2) compartmentalization in synaptic boutons (PubMed:28414717, PubMed:33300871). There it acts at the periactive zone to provide the low Ca(2+) levels required to initiate Calcineurin activation and upregulate PtdIns(4,5)P2 (PubMed:33300871). Conversely PtdIns(4,5)P2 enhances fwe Ca(2+) channel-activity, establishing a positive feedback loop that induces PtdIns(4,5)P2 microdomain at the periactive zone (PubMed:33300871). These microdomains trigger bulk membrane invagination (i.e. ADBE) by triggering actin polymerization while also promoting localization of fwe to bulk endosomes, thereby removing the ADBE trigger to reduce endocytosis and prevent excess membrane uptake (PubMed:33300871). PtdIns(4,5)P2 then promotes SV reformation from the bulk endosomes, to coordinate ADBE and subsequent SV reformation (PubMed:33300871). Different combinations of the flower isoforms at the cell membrane are also required for the identification and elimination of suboptimal or supernumerary cells during development, regeneration, and adulthood (PubMed:20627080, PubMed:20951347, PubMed:23810538, PubMed:25601460, PubMed:28011160, PubMed:30590040). Required for the recognition and elimination of unfit cells in the developing wing during cell competition (PubMed:20627080). Also required for efficient identification and elimination of injured, damaged and/or dysfunctional neurons during regeneration of the adult brain (PubMed:25754635, PubMed:30590040). In the developing pupal retina, mediates the elimination of unwanted postmitotic neurons, including supernumerary photoreceptor neurons that form at the periphery of the retina and are contained within incomplete ommatidia units (PubMed:23810538). Downstream of the flower fitness fingerprints, cells identified as unwanted or unfit are eliminated via apoptosis through the expression of ahuizotl (azot) (PubMed:25601460, PubMed:30590040). However, the cells marked for elimination by the flower isoforms only undergo apoptosis if additional thresholds are met; (1) their neighboring fit/healthy cells express different levels of the fwe isoforms, and (2) the levels of the protective signal SPARC expressed by the loser or unwanted cells are unable to inhibit caspase activation (PubMed:20627080, PubMed:20951347, PubMed:23810538). These additional thresholds for flower-mediated apoptosis, allows useful cells to recover from transient and limited stress before they are unnecessarily eliminated (PubMed:20951347). Functions with dally and magu in a mechanism of scaling, which utilises apoptosis to ensure that the dpp morphogen gradient, which mediates organ growth, remains proportional to the size of the growing wing (PubMed:35301437). In this mechanism, fwe represses dally- and Magu-dependent activity in expanding the gradient, and dally/Magu inhibits fwe-dependent apoptosis to keep cell death rate low (PubMed:35301437). When the levels of these different proteins are optimally regulated the gradient correctly scales with organ growth but when this fails, fwe-mediated apoptosis is activated to trim the developing tissue to match the correct size of the gradient (PubMed:35301437).</text>
</comment>
<comment type="function">
    <molecule>Isoform Ubi</molecule>
    <text evidence="4 7">Functions with the other flower isoforms to produce tissue-specific fitness fingerprints that identify unfit or fit cells during cell selection processes in order to maintain tissue health (PubMed:20627080, PubMed:25601460). In the wing imaginal disk, this isoform is highly expressed in healthy/normal cells but is down-regulated in cells with decreased fitness (PubMed:20627080). During cell competition, if levels of this isoform in unfit cells is lower than in the surrounding neighboring cells, the suboptimal cells are recognized as 'loser' cells, and undergo elimination via apoptosis to be replaced by the surrounding healthy 'winner' cell population (PubMed:20627080).</text>
</comment>
<comment type="function">
    <molecule>Isoform Lose-A</molecule>
    <text evidence="4 7">Functions with the other flower isoforms to produce tissue-specific fitness fingerprints that identify unfit or fit cells during cell selection processes in order to maintain tissue health (PubMed:20627080, PubMed:25601460). In the wing imaginal disk, this isoform displays low levels of expression in healthy/normal cells but is up-regulated in cells with decreased fitness (PubMed:20627080, PubMed:25601460). During cell competition, if levels of this isoform in unfit cells is higher than in the surrounding neighboring cells, the suboptimal cells are recognized as 'loser' cells, and undergo elimination via apoptosis to be replaced by the surrounding healthy 'winner' cell population (PubMed:20627080, PubMed:25601460).</text>
</comment>
<comment type="function">
    <molecule>Isoform Lose-B</molecule>
    <text evidence="4 6 7 8 12">Functions with the other flower isoforms to produce tissue-specific fitness fingerprints that identify unfit cells for cell selection processes during development, regeneration, and to maintain tissue health (PubMed:20627080, PubMed:25601460, PubMed:25754635, PubMed:30590040). During cell competition in certain tissues, marks suboptimal or damaged cells as 'loser' cells (PubMed:20627080, PubMed:25601460, PubMed:25754635, PubMed:30590040). In cells of the wing imaginal disk and damaged or dysfunctional neurons in the adult optic lobe, this isoform displays low to no expression in healthy/normal cells but is up-regulated in cells with decreased fitness or damage-affected neurons (PubMed:20627080, PubMed:25754635, PubMed:30590040). During cell competition, if levels of this isoform in unfit cells is higher than in the surrounding neighboring cells, the suboptimal cells are recognized as 'loser' cells, and undergo elimination via apoptosis to be replaced by the surrounding healthy/undamaged 'winner' cell population (PubMed:20627080, PubMed:25754635, PubMed:30590040). In the developing pupal retina, also required for the recognition and elimination of postmitotic neurons, including supernumerary photoreceptor neurons that form at the periphery of the retina and are contained within incomplete ommatidia units (PubMed:23810538). Activity at the peripheral retina is induced by the wg signaling pathway but, once activated, it promotes apoptosis of supernumerary photoreceptor neurons independently of wg signaling and snail function (PubMed:23810538).</text>
</comment>
<comment type="activity regulation">
    <text evidence="10">Channel activity is inhibited by La(3+), which reduces Ca(2+) influx and thus inhibits it's function in promoting activity-dependent bulk endocytosis (ADBE) in response to high stimuli.</text>
</comment>
<comment type="subunit">
    <molecule>Isoform Ubi</molecule>
    <text evidence="14">Associates with the dally/ magu complex.</text>
</comment>
<comment type="subunit">
    <molecule>Isoform Lose-A</molecule>
    <text evidence="3 14">Homomultimer (PubMed:19737521). Associates with the dally/ magu complex (PubMed:35301437).</text>
</comment>
<comment type="subunit">
    <molecule>Isoform Lose-B</molecule>
    <text evidence="14">Associates with the dally/ magu complex.</text>
</comment>
<comment type="interaction">
    <interactant intactId="EBI-169467">
        <id>Q95T12</id>
    </interactant>
    <interactant intactId="EBI-169467">
        <id>Q95T12</id>
        <label>fwe</label>
    </interactant>
    <organismsDiffer>false</organismsDiffer>
    <experiments>7</experiments>
</comment>
<comment type="interaction">
    <interactant intactId="EBI-2497181">
        <id>Q95T12-2</id>
    </interactant>
    <interactant intactId="EBI-2497181">
        <id>Q95T12-2</id>
        <label>fwe</label>
    </interactant>
    <organismsDiffer>false</organismsDiffer>
    <experiments>5</experiments>
</comment>
<comment type="subcellular location">
    <subcellularLocation>
        <location evidence="1">Cell membrane</location>
        <topology evidence="1">Multi-pass membrane protein</topology>
    </subcellularLocation>
    <subcellularLocation>
        <location evidence="3 13">Cytoplasmic vesicle</location>
        <location evidence="3 13">Secretory vesicle</location>
        <location evidence="3 13">Synaptic vesicle membrane</location>
        <topology evidence="3">Multi-pass membrane protein</topology>
    </subcellularLocation>
    <subcellularLocation>
        <location evidence="10 13">Presynaptic cell membrane</location>
    </subcellularLocation>
    <subcellularLocation>
        <location evidence="13">Endosome</location>
    </subcellularLocation>
    <text evidence="3 10 13">Upon fusion of the synaptic vesicle (SV) with the presynaptic membrane, protein transfers from the SV to the periactive zones where endocytosis is known to occur (PubMed:19737521, PubMed:28414717, PubMed:33300871). Upon high K(+) stimulation, expression levels in NMJ boutons are higher in bulk endosomes than in synaptic vesicles, suggesting that it is recycled to bulk endosomes after it activates ADBE (PubMed:33300871).</text>
</comment>
<comment type="subcellular location">
    <molecule>Isoform Ubi</molecule>
    <subcellularLocation>
        <location evidence="4 8 14">Cell membrane</location>
        <topology evidence="1">Multi-pass membrane protein</topology>
    </subcellularLocation>
    <subcellularLocation>
        <location evidence="13">Cytoplasmic vesicle</location>
        <location evidence="13">Secretory vesicle</location>
        <location evidence="13">Synaptic vesicle</location>
    </subcellularLocation>
    <text evidence="4">Localizes to the apico-lateral membranes in wing imaginal disks and salivary gland cells.</text>
</comment>
<comment type="subcellular location">
    <molecule>Isoform Lose-A</molecule>
    <subcellularLocation>
        <location evidence="8 14">Cell membrane</location>
        <topology evidence="1">Multi-pass membrane protein</topology>
    </subcellularLocation>
    <subcellularLocation>
        <location evidence="13">Cytoplasmic vesicle</location>
        <location evidence="13">Secretory vesicle</location>
        <location evidence="13">Synaptic vesicle</location>
    </subcellularLocation>
</comment>
<comment type="subcellular location">
    <molecule>Isoform Lose-B</molecule>
    <subcellularLocation>
        <location evidence="8 14">Cell membrane</location>
        <topology evidence="1">Multi-pass membrane protein</topology>
    </subcellularLocation>
    <subcellularLocation>
        <location evidence="13">Cytoplasmic vesicle</location>
        <location evidence="13">Secretory vesicle</location>
        <location evidence="13">Synaptic vesicle</location>
    </subcellularLocation>
</comment>
<comment type="alternative products">
    <event type="alternative splicing"/>
    <isoform>
        <id>Q95T12-1</id>
        <name evidence="17">Ubi</name>
        <name evidence="16">A</name>
        <sequence type="displayed"/>
    </isoform>
    <isoform>
        <id>Q95T12-2</id>
        <name evidence="17">Lose-A</name>
        <name evidence="17">LoseA</name>
        <name evidence="16">B</name>
        <sequence type="described" ref="VSP_053166"/>
    </isoform>
    <isoform>
        <id>Q95T12-3</id>
        <name evidence="17">Lose-B</name>
        <name evidence="17">LoseB</name>
        <name evidence="16">C</name>
        <sequence type="described" ref="VSP_053165"/>
    </isoform>
</comment>
<comment type="tissue specificity">
    <text evidence="14">Detected in the imaginal wing disk (at protein level).</text>
</comment>
<comment type="tissue specificity">
    <molecule>Isoform Ubi</molecule>
    <text evidence="8">Detected throughout the adult brain, including the optic lobe but, at much lower levels of expression than isoform Lose-A.</text>
</comment>
<comment type="tissue specificity">
    <molecule>Isoform Lose-A</molecule>
    <text evidence="8 12">Detected in the optic lobe (at protein level) (PubMed:25754635). Detected throughout the adult brain, including the optic lobe (PubMed:25754635, PubMed:30590040). Expressed in damaged and undamaged optic lobe neurons (PubMed:25754635, PubMed:30590040).</text>
</comment>
<comment type="tissue specificity">
    <molecule>Isoform Lose-B</molecule>
    <text evidence="8 12">Expressed in optic lobe neurons, with higher levels of expression in suboptimal neurons (PubMed:30590040). Specifically expressed in injury-damaged optic lobe neurons (PubMed:25754635).</text>
</comment>
<comment type="developmental stage">
    <molecule>Isoform Ubi</molecule>
    <text evidence="4 6">Detected in all imaginal disk cells and salivary gland cells (at protein level) (PubMed:20627080). In pupae, ubiquitously expressed in the retina including the neuronal layer (at protein level) (PubMed:23810538).</text>
</comment>
<comment type="developmental stage">
    <molecule>Isoform Lose-A</molecule>
    <text evidence="3 6">In pupal retinas, detected at 24 hr after pupal formation (APF) to 42 hr APF, where it is ubiquitously expressed throughout the retina including the neuronal layer (at protein level) (PubMed:23810538). Expressed in the neuropils of embryonic, larval, adult CNS, and R1-R6 terminals. Expression in the central nervous system (CNS) starts at embryonic stage 13 (PubMed:19737521).</text>
</comment>
<comment type="developmental stage">
    <molecule>Isoform Lose-B</molecule>
    <text evidence="6">In pupal retinas, specifically expressed at the periphery in photoreceptor neurons that are undergoing apoptosis (at protein level) (PubMed:23810538). Expression in the pupal retinas is not detected until 36 hr after pupal formation (APF) and is maintained until 44 hr APF; this is during the retina 'late cell death' event when peripheral ommatidia are being eliminated from the final structure (at protein level) (PubMed:23810538).</text>
</comment>
<comment type="induction">
    <molecule>Isoform Lose-A</molecule>
    <text evidence="7">Induced in the midgut and adult brain by tissue damage caused by UV irradiation.</text>
</comment>
<comment type="induction">
    <molecule>Isoform Lose-B</molecule>
    <text evidence="7 8">Induced in the midgut and adult brain by tissue damage caused by UV irradiation (PubMed:25601460). Up-regulated in optic lobe neurons that have been damaged by lesioning the optic lobe unilaterally causing penetrating traumatic brain injury (PubMed:25754635).</text>
</comment>
<comment type="disruption phenotype">
    <text evidence="3 4 5 9 14">Lethal; mutants die either during the embryonic stage or the first instar larval stage (PubMed:28011160). Embryos frequently display head involution defects, some do not develop a cuticle and/or occasionally display dorsal closure defects (PubMed:28011160). The nervous system of embryos also displays developmental defects (PubMed:19737521, PubMed:20627080). In presynaptic terminals, intracellular resting calcium levels and endocytosis is impaired, whereas exocytosis is normal (PubMed:19737521). Boutons at the neuromuscular junctions exhibit a significant depletion in the number of synaptic vesicles (PubMed:19737521). There are numerous extra boutons which are often small, clustered, and flowery in nature (PubMed:19737521). Mutant nerve terminals display omega structures and collared pits (PubMed:19737521). RNAi-mediated knockdown in wing disks reduces cell apoptosis during Myc-mediated cell competition experiments (PubMed:28011160, PubMed:35301437). RNAi-mediated knockdown in the posterior compartment of the wing disk, has no effect on tissue growth under normal conditions however, growth is reduced in tissues undergoing Myc-mediated cell competition (PubMed:20627080). RNAi-mediated knockdown during Myc-mediated cell competition experiments, has no effect on up-regulation of SPARC in loser cells (PubMed:20951347).</text>
</comment>
<comment type="disruption phenotype">
    <molecule>Isoform Ubi</molecule>
    <text evidence="4">RNAi-mediated knockdown in the posterior compartment of the wing disk, does not induce apoptosis and has no effect on compartment growth.</text>
</comment>
<comment type="miscellaneous">
    <text evidence="16">The name 'flower' derives from mutants that display numerous extra boutons that are small, clustered, and flowery in nature.</text>
</comment>
<comment type="similarity">
    <text evidence="18">Belongs to the calcium channel flower family.</text>
</comment>
<accession>Q95T12</accession>
<accession>Q8IQM8</accession>
<accession>Q9VUU2</accession>
<proteinExistence type="evidence at protein level"/>
<organism>
    <name type="scientific">Drosophila melanogaster</name>
    <name type="common">Fruit fly</name>
    <dbReference type="NCBI Taxonomy" id="7227"/>
    <lineage>
        <taxon>Eukaryota</taxon>
        <taxon>Metazoa</taxon>
        <taxon>Ecdysozoa</taxon>
        <taxon>Arthropoda</taxon>
        <taxon>Hexapoda</taxon>
        <taxon>Insecta</taxon>
        <taxon>Pterygota</taxon>
        <taxon>Neoptera</taxon>
        <taxon>Endopterygota</taxon>
        <taxon>Diptera</taxon>
        <taxon>Brachycera</taxon>
        <taxon>Muscomorpha</taxon>
        <taxon>Ephydroidea</taxon>
        <taxon>Drosophilidae</taxon>
        <taxon>Drosophila</taxon>
        <taxon>Sophophora</taxon>
    </lineage>
</organism>
<evidence type="ECO:0000255" key="1"/>
<evidence type="ECO:0000269" key="2">
    <source>
    </source>
</evidence>
<evidence type="ECO:0000269" key="3">
    <source>
    </source>
</evidence>
<evidence type="ECO:0000269" key="4">
    <source>
    </source>
</evidence>
<evidence type="ECO:0000269" key="5">
    <source>
    </source>
</evidence>
<evidence type="ECO:0000269" key="6">
    <source>
    </source>
</evidence>
<evidence type="ECO:0000269" key="7">
    <source>
    </source>
</evidence>
<evidence type="ECO:0000269" key="8">
    <source>
    </source>
</evidence>
<evidence type="ECO:0000269" key="9">
    <source>
    </source>
</evidence>
<evidence type="ECO:0000269" key="10">
    <source>
    </source>
</evidence>
<evidence type="ECO:0000269" key="11">
    <source>
    </source>
</evidence>
<evidence type="ECO:0000269" key="12">
    <source>
    </source>
</evidence>
<evidence type="ECO:0000269" key="13">
    <source>
    </source>
</evidence>
<evidence type="ECO:0000269" key="14">
    <source>
    </source>
</evidence>
<evidence type="ECO:0000303" key="15">
    <source>
    </source>
</evidence>
<evidence type="ECO:0000303" key="16">
    <source>
    </source>
</evidence>
<evidence type="ECO:0000303" key="17">
    <source>
    </source>
</evidence>
<evidence type="ECO:0000305" key="18"/>
<evidence type="ECO:0000312" key="19">
    <source>
        <dbReference type="EMBL" id="AAL25424.1"/>
    </source>
</evidence>
<evidence type="ECO:0000312" key="20">
    <source>
        <dbReference type="EMBL" id="AAN11767.1"/>
    </source>
</evidence>
<feature type="chain" id="PRO_0000389234" description="Calcium channel flower">
    <location>
        <begin position="1"/>
        <end position="194"/>
    </location>
</feature>
<feature type="topological domain" description="Cytoplasmic" evidence="18">
    <location>
        <begin position="1"/>
        <end position="34"/>
    </location>
</feature>
<feature type="transmembrane region" description="Helical" evidence="1">
    <location>
        <begin position="35"/>
        <end position="55"/>
    </location>
</feature>
<feature type="topological domain" description="Extracellular" evidence="18">
    <location>
        <begin position="56"/>
        <end position="65"/>
    </location>
</feature>
<feature type="transmembrane region" description="Helical" evidence="1">
    <location>
        <begin position="66"/>
        <end position="88"/>
    </location>
</feature>
<feature type="topological domain" description="Cytoplasmic" evidence="18">
    <location>
        <begin position="89"/>
        <end position="106"/>
    </location>
</feature>
<feature type="transmembrane region" description="Helical" evidence="1">
    <location>
        <begin position="107"/>
        <end position="127"/>
    </location>
</feature>
<feature type="topological domain" description="Extracellular" evidence="18">
    <location>
        <begin position="128"/>
        <end position="194"/>
    </location>
</feature>
<feature type="site" description="Calcium ion selectivity" evidence="3">
    <location>
        <position position="79"/>
    </location>
</feature>
<feature type="splice variant" id="VSP_053165" description="In isoform Lose-B." evidence="15 16">
    <original>KASAEDMRAAAQQTFGGNTPAQTNDRAGIVNNAQPFSFTGAVGTDSNV</original>
    <variation>NKHIFLVRNYI</variation>
    <location>
        <begin position="147"/>
        <end position="194"/>
    </location>
</feature>
<feature type="splice variant" id="VSP_053166" description="In isoform Lose-A." evidence="15 16">
    <original>AEDMRAAAQQTFGGNTPAQTNDRAGIVNNAQPFSFTGAVGTDSNV</original>
    <variation>REDMAAAATSPTQMAGSQAGGQMQMGGDQHITLMEDPDVWRPT</variation>
    <location>
        <begin position="150"/>
        <end position="194"/>
    </location>
</feature>
<feature type="mutagenesis site" description="Impaired Ca(2+) channel activity. Heterologous expression in salivary glands shows inhibition of calcium influx. Following strong stimulation that induces activity-dependent bulk endocytosis (ADBE), loses ability to promote the Ca(2+) channel-dependent formation of phosphatidylinositol 4,5-bisphosphate (PtdIns(4,5)P2) microdomains at periactive zones in the synaptic boutons of larval NMJs. However, no effect on activating Clathrin-mediated endocytosis (CME) in NMJ boutons in response to mild stimulation." evidence="3 10 13">
    <original>E</original>
    <variation>Q</variation>
    <location>
        <position position="79"/>
    </location>
</feature>
<feature type="mutagenesis site" description="In allele DB25; defect in synaptic transmission and homozygous lethal." evidence="3">
    <original>G</original>
    <variation>D</variation>
    <location>
        <position position="128"/>
    </location>
</feature>
<feature type="region of interest" description="Important for promoting apoptosis" evidence="4">
    <location sequence="Q95T12-2">
        <begin position="135"/>
        <end position="192"/>
    </location>
</feature>
<feature type="mutagenesis site" description="Following high K+ stimulation, displays reduced formation of PtdIns(4,5)P2 microdomains at periactive zones and an impaired Ca2+ response in NMJ boutons, and decreased binding to phosphatidylinositol 4,5-bisphosphate (PtdIns(4,5)P2). Unable to rescue stimulation induced activity-dependent bulk endocytosis (ADBE) and synaptic vesicle replacement in mutants. No affect on localization to the presynaptic compartments of NMJ boutons. Severe decrease in binding to PtdIns(4,5)P2; when associated with A-95, A-100, A-105 and 146-A--A-150." evidence="13">
    <original>KYGSR</original>
    <variation>AYGSA</variation>
    <location sequence="Q95T12-2">
        <begin position="29"/>
        <end position="33"/>
    </location>
</feature>
<feature type="mutagenesis site" description="Decreased binding to phosphatidylinositol 4,5-bisphosphate (PtdIns(4,5)P2); when associated with A-100, A-105 and 146-A--A-150. Severe decrease in binding to PtdIns(4,5)P2; when associated with 29-A--A-33, A-100, A-105 and 146-A--A-150." evidence="13">
    <original>E</original>
    <variation>A</variation>
    <location sequence="Q95T12-2">
        <position position="95"/>
    </location>
</feature>
<feature type="mutagenesis site" description="Decreased binding to phosphatidylinositol 4,5-bisphosphate (PtdIns(4,5)P2); when associated with A-95, A-105 and 146-A--A-150. Severe decrease in binding to PtdIns(4,5)P2; when associated with 29-A--A-33, A-95, A-105 and 146-A--A-150." evidence="13">
    <original>K</original>
    <variation>A</variation>
    <location sequence="Q95T12-2">
        <position position="100"/>
    </location>
</feature>
<feature type="mutagenesis site" description="Decreased binding to phosphatidylinositol 4,5-bisphosphate (PtdIns(4,5)P2); when associated with A-95, A-100 and 146-A--A-150. Severe decrease in binding to PtdIns(4,5)P2; when associated with 29-A--A-33, A-95, A-100 and 146-A--A-150." evidence="13">
    <original>R</original>
    <variation>A</variation>
    <location sequence="Q95T12-2">
        <position position="105"/>
    </location>
</feature>
<feature type="mutagenesis site" description="Following high K+ stimuli, no effect on synaptic vesicle localization, regulation of presynaptic Ca(2+) concentration, induction of phosphatidylinositol 4,5-bisphosphate (PtdIns(4,5)P2) in NMJ boutons or activity-dependent bulk endocytosis (ADBE). Severe decrease in binding to phosphatidylinositol 4,5-bisphosphate (PtdIns(4,5)P2); when associated with 29-A--A-33, A-95, A-100 and A-105." evidence="13">
    <original>KKASR</original>
    <variation>AAASA</variation>
    <location sequence="Q95T12-2">
        <begin position="146"/>
        <end position="150"/>
    </location>
</feature>
<feature type="region of interest" description="Important for promoting apoptosis" evidence="4">
    <location sequence="Q95T12-3">
        <begin position="135"/>
        <end position="157"/>
    </location>
</feature>
<dbReference type="EMBL" id="AE014296">
    <property type="protein sequence ID" value="AAF49581.1"/>
    <property type="molecule type" value="Genomic_DNA"/>
</dbReference>
<dbReference type="EMBL" id="AE014296">
    <property type="protein sequence ID" value="AAN11767.1"/>
    <property type="molecule type" value="Genomic_DNA"/>
</dbReference>
<dbReference type="EMBL" id="AE014296">
    <property type="protein sequence ID" value="AAN11768.1"/>
    <property type="molecule type" value="Genomic_DNA"/>
</dbReference>
<dbReference type="EMBL" id="AY060385">
    <property type="protein sequence ID" value="AAL25424.1"/>
    <property type="molecule type" value="mRNA"/>
</dbReference>
<dbReference type="RefSeq" id="NP_648804.1">
    <molecule id="Q95T12-1"/>
    <property type="nucleotide sequence ID" value="NM_140547.5"/>
</dbReference>
<dbReference type="RefSeq" id="NP_730071.1">
    <molecule id="Q95T12-3"/>
    <property type="nucleotide sequence ID" value="NM_168632.4"/>
</dbReference>
<dbReference type="RefSeq" id="NP_730072.1">
    <molecule id="Q95T12-2"/>
    <property type="nucleotide sequence ID" value="NM_168633.4"/>
</dbReference>
<dbReference type="BioGRID" id="65034">
    <property type="interactions" value="24"/>
</dbReference>
<dbReference type="FunCoup" id="Q95T12">
    <property type="interactions" value="787"/>
</dbReference>
<dbReference type="IntAct" id="Q95T12">
    <property type="interactions" value="28"/>
</dbReference>
<dbReference type="STRING" id="7227.FBpp0075297"/>
<dbReference type="TCDB" id="1.A.55.1.2">
    <property type="family name" value="the synaptic vesicle-associated ca(2+) channel, flower (flower) family"/>
</dbReference>
<dbReference type="SwissPalm" id="Q95T12"/>
<dbReference type="PaxDb" id="7227-FBpp0075297"/>
<dbReference type="DNASU" id="39720"/>
<dbReference type="EnsemblMetazoa" id="FBtr0075541">
    <molecule id="Q95T12-2"/>
    <property type="protein sequence ID" value="FBpp0075296"/>
    <property type="gene ID" value="FBgn0261722"/>
</dbReference>
<dbReference type="EnsemblMetazoa" id="FBtr0075542">
    <molecule id="Q95T12-1"/>
    <property type="protein sequence ID" value="FBpp0075297"/>
    <property type="gene ID" value="FBgn0261722"/>
</dbReference>
<dbReference type="EnsemblMetazoa" id="FBtr0075543">
    <molecule id="Q95T12-3"/>
    <property type="protein sequence ID" value="FBpp0075298"/>
    <property type="gene ID" value="FBgn0261722"/>
</dbReference>
<dbReference type="GeneID" id="39720"/>
<dbReference type="KEGG" id="dme:Dmel_CG6151"/>
<dbReference type="UCSC" id="CG6151-RA">
    <molecule id="Q95T12-1"/>
    <property type="organism name" value="d. melanogaster"/>
</dbReference>
<dbReference type="UCSC" id="CG6151-RB">
    <property type="organism name" value="d. melanogaster"/>
</dbReference>
<dbReference type="UCSC" id="CG6151-RC">
    <property type="organism name" value="d. melanogaster"/>
</dbReference>
<dbReference type="AGR" id="FB:FBgn0261722"/>
<dbReference type="CTD" id="39720"/>
<dbReference type="FlyBase" id="FBgn0261722">
    <property type="gene designation" value="fwe"/>
</dbReference>
<dbReference type="VEuPathDB" id="VectorBase:FBgn0261722"/>
<dbReference type="eggNOG" id="KOG4085">
    <property type="taxonomic scope" value="Eukaryota"/>
</dbReference>
<dbReference type="GeneTree" id="ENSGT00390000000529"/>
<dbReference type="HOGENOM" id="CLU_108196_0_0_1"/>
<dbReference type="InParanoid" id="Q95T12"/>
<dbReference type="OMA" id="YWQKAAL"/>
<dbReference type="OrthoDB" id="9934994at2759"/>
<dbReference type="PhylomeDB" id="Q95T12"/>
<dbReference type="BioGRID-ORCS" id="39720">
    <property type="hits" value="0 hits in 1 CRISPR screen"/>
</dbReference>
<dbReference type="GenomeRNAi" id="39720"/>
<dbReference type="PRO" id="PR:Q95T12"/>
<dbReference type="Proteomes" id="UP000000803">
    <property type="component" value="Chromosome 3L"/>
</dbReference>
<dbReference type="Bgee" id="FBgn0261722">
    <property type="expression patterns" value="Expressed in adult gamma Kenyon cell in brain and 262 other cell types or tissues"/>
</dbReference>
<dbReference type="ExpressionAtlas" id="Q95T12">
    <property type="expression patterns" value="baseline and differential"/>
</dbReference>
<dbReference type="GO" id="GO:0042995">
    <property type="term" value="C:cell projection"/>
    <property type="evidence" value="ECO:0007669"/>
    <property type="project" value="UniProtKB-KW"/>
</dbReference>
<dbReference type="GO" id="GO:0005768">
    <property type="term" value="C:endosome"/>
    <property type="evidence" value="ECO:0007669"/>
    <property type="project" value="UniProtKB-SubCell"/>
</dbReference>
<dbReference type="GO" id="GO:0005886">
    <property type="term" value="C:plasma membrane"/>
    <property type="evidence" value="ECO:0000314"/>
    <property type="project" value="FlyBase"/>
</dbReference>
<dbReference type="GO" id="GO:0042734">
    <property type="term" value="C:presynaptic membrane"/>
    <property type="evidence" value="ECO:0007669"/>
    <property type="project" value="UniProtKB-SubCell"/>
</dbReference>
<dbReference type="GO" id="GO:0030672">
    <property type="term" value="C:synaptic vesicle membrane"/>
    <property type="evidence" value="ECO:0000314"/>
    <property type="project" value="UniProtKB"/>
</dbReference>
<dbReference type="GO" id="GO:0005262">
    <property type="term" value="F:calcium channel activity"/>
    <property type="evidence" value="ECO:0000314"/>
    <property type="project" value="FlyBase"/>
</dbReference>
<dbReference type="GO" id="GO:0042802">
    <property type="term" value="F:identical protein binding"/>
    <property type="evidence" value="ECO:0000353"/>
    <property type="project" value="IntAct"/>
</dbReference>
<dbReference type="GO" id="GO:0150008">
    <property type="term" value="P:bulk synaptic vesicle endocytosis"/>
    <property type="evidence" value="ECO:0000315"/>
    <property type="project" value="FlyBase"/>
</dbReference>
<dbReference type="GO" id="GO:0070588">
    <property type="term" value="P:calcium ion transmembrane transport"/>
    <property type="evidence" value="ECO:0000315"/>
    <property type="project" value="FlyBase"/>
</dbReference>
<dbReference type="GO" id="GO:0006816">
    <property type="term" value="P:calcium ion transport"/>
    <property type="evidence" value="ECO:0000314"/>
    <property type="project" value="FlyBase"/>
</dbReference>
<dbReference type="GO" id="GO:0035212">
    <property type="term" value="P:cell competition in a multicellular organism"/>
    <property type="evidence" value="ECO:0000315"/>
    <property type="project" value="FlyBase"/>
</dbReference>
<dbReference type="GO" id="GO:0150007">
    <property type="term" value="P:clathrin-dependent synaptic vesicle endocytosis"/>
    <property type="evidence" value="ECO:0000315"/>
    <property type="project" value="FlyBase"/>
</dbReference>
<dbReference type="GO" id="GO:0046530">
    <property type="term" value="P:photoreceptor cell differentiation"/>
    <property type="evidence" value="ECO:0000315"/>
    <property type="project" value="UniProtKB"/>
</dbReference>
<dbReference type="GO" id="GO:0043525">
    <property type="term" value="P:positive regulation of neuron apoptotic process"/>
    <property type="evidence" value="ECO:0000315"/>
    <property type="project" value="FlyBase"/>
</dbReference>
<dbReference type="GO" id="GO:0099533">
    <property type="term" value="P:positive regulation of presynaptic cytosolic calcium concentration"/>
    <property type="evidence" value="ECO:0000315"/>
    <property type="project" value="FlyBase"/>
</dbReference>
<dbReference type="GO" id="GO:0042981">
    <property type="term" value="P:regulation of apoptotic process"/>
    <property type="evidence" value="ECO:0000315"/>
    <property type="project" value="FlyBase"/>
</dbReference>
<dbReference type="GO" id="GO:0048488">
    <property type="term" value="P:synaptic vesicle endocytosis"/>
    <property type="evidence" value="ECO:0000315"/>
    <property type="project" value="UniProtKB"/>
</dbReference>
<dbReference type="GO" id="GO:0016192">
    <property type="term" value="P:vesicle-mediated transport"/>
    <property type="evidence" value="ECO:0000318"/>
    <property type="project" value="GO_Central"/>
</dbReference>
<dbReference type="InterPro" id="IPR019365">
    <property type="entry name" value="TVP18/Ca-channel_flower"/>
</dbReference>
<dbReference type="PANTHER" id="PTHR13314">
    <property type="entry name" value="CALCIUM CHANNEL FLOWER HOMOLOG"/>
    <property type="match status" value="1"/>
</dbReference>
<dbReference type="PANTHER" id="PTHR13314:SF2">
    <property type="entry name" value="CALCIUM CHANNEL FLOWER HOMOLOG"/>
    <property type="match status" value="1"/>
</dbReference>
<dbReference type="Pfam" id="PF10233">
    <property type="entry name" value="Cg6151-P"/>
    <property type="match status" value="1"/>
</dbReference>
<dbReference type="SMART" id="SM01077">
    <property type="entry name" value="Cg6151-P"/>
    <property type="match status" value="1"/>
</dbReference>
<keyword id="KW-0025">Alternative splicing</keyword>
<keyword id="KW-0106">Calcium</keyword>
<keyword id="KW-0107">Calcium channel</keyword>
<keyword id="KW-0109">Calcium transport</keyword>
<keyword id="KW-1003">Cell membrane</keyword>
<keyword id="KW-0966">Cell projection</keyword>
<keyword id="KW-0968">Cytoplasmic vesicle</keyword>
<keyword id="KW-0254">Endocytosis</keyword>
<keyword id="KW-0967">Endosome</keyword>
<keyword id="KW-0407">Ion channel</keyword>
<keyword id="KW-0406">Ion transport</keyword>
<keyword id="KW-0472">Membrane</keyword>
<keyword id="KW-1185">Reference proteome</keyword>
<keyword id="KW-0770">Synapse</keyword>
<keyword id="KW-0812">Transmembrane</keyword>
<keyword id="KW-1133">Transmembrane helix</keyword>
<keyword id="KW-0813">Transport</keyword>
<protein>
    <recommendedName>
        <fullName evidence="16">Calcium channel flower</fullName>
        <shortName evidence="16">3L5</shortName>
    </recommendedName>
</protein>
<name>FLOWR_DROME</name>
<gene>
    <name type="primary">fwe</name>
    <name type="synonym">flower</name>
    <name type="ORF">CG6151</name>
</gene>